<gene>
    <name evidence="1" type="primary">dut</name>
    <name type="ordered locus">FTF0319</name>
</gene>
<organism>
    <name type="scientific">Francisella tularensis subsp. tularensis (strain FSC 198)</name>
    <dbReference type="NCBI Taxonomy" id="393115"/>
    <lineage>
        <taxon>Bacteria</taxon>
        <taxon>Pseudomonadati</taxon>
        <taxon>Pseudomonadota</taxon>
        <taxon>Gammaproteobacteria</taxon>
        <taxon>Thiotrichales</taxon>
        <taxon>Francisellaceae</taxon>
        <taxon>Francisella</taxon>
    </lineage>
</organism>
<feature type="chain" id="PRO_1000015467" description="Deoxyuridine 5'-triphosphate nucleotidohydrolase">
    <location>
        <begin position="1"/>
        <end position="148"/>
    </location>
</feature>
<feature type="binding site" evidence="1">
    <location>
        <begin position="67"/>
        <end position="69"/>
    </location>
    <ligand>
        <name>substrate</name>
    </ligand>
</feature>
<feature type="binding site" evidence="1">
    <location>
        <position position="80"/>
    </location>
    <ligand>
        <name>substrate</name>
    </ligand>
</feature>
<feature type="binding site" evidence="1">
    <location>
        <begin position="84"/>
        <end position="86"/>
    </location>
    <ligand>
        <name>substrate</name>
    </ligand>
</feature>
<feature type="binding site" evidence="1">
    <location>
        <position position="94"/>
    </location>
    <ligand>
        <name>substrate</name>
    </ligand>
</feature>
<keyword id="KW-0378">Hydrolase</keyword>
<keyword id="KW-0460">Magnesium</keyword>
<keyword id="KW-0479">Metal-binding</keyword>
<keyword id="KW-0546">Nucleotide metabolism</keyword>
<accession>Q14JC6</accession>
<name>DUT_FRAT1</name>
<comment type="function">
    <text evidence="1">This enzyme is involved in nucleotide metabolism: it produces dUMP, the immediate precursor of thymidine nucleotides and it decreases the intracellular concentration of dUTP so that uracil cannot be incorporated into DNA.</text>
</comment>
<comment type="catalytic activity">
    <reaction evidence="1">
        <text>dUTP + H2O = dUMP + diphosphate + H(+)</text>
        <dbReference type="Rhea" id="RHEA:10248"/>
        <dbReference type="ChEBI" id="CHEBI:15377"/>
        <dbReference type="ChEBI" id="CHEBI:15378"/>
        <dbReference type="ChEBI" id="CHEBI:33019"/>
        <dbReference type="ChEBI" id="CHEBI:61555"/>
        <dbReference type="ChEBI" id="CHEBI:246422"/>
        <dbReference type="EC" id="3.6.1.23"/>
    </reaction>
</comment>
<comment type="cofactor">
    <cofactor evidence="1">
        <name>Mg(2+)</name>
        <dbReference type="ChEBI" id="CHEBI:18420"/>
    </cofactor>
</comment>
<comment type="pathway">
    <text evidence="1">Pyrimidine metabolism; dUMP biosynthesis; dUMP from dCTP (dUTP route): step 2/2.</text>
</comment>
<comment type="similarity">
    <text evidence="1">Belongs to the dUTPase family.</text>
</comment>
<evidence type="ECO:0000255" key="1">
    <source>
        <dbReference type="HAMAP-Rule" id="MF_00116"/>
    </source>
</evidence>
<proteinExistence type="inferred from homology"/>
<reference key="1">
    <citation type="journal article" date="2007" name="PLoS ONE">
        <title>Genome sequencing shows that European isolates of Francisella tularensis subspecies tularensis are almost identical to US laboratory strain Schu S4.</title>
        <authorList>
            <person name="Chaudhuri R.R."/>
            <person name="Ren C.-P."/>
            <person name="Desmond L."/>
            <person name="Vincent G.A."/>
            <person name="Silman N.J."/>
            <person name="Brehm J.K."/>
            <person name="Elmore M.J."/>
            <person name="Hudson M.J."/>
            <person name="Forsman M."/>
            <person name="Isherwood K.E."/>
            <person name="Gurycova D."/>
            <person name="Minton N.P."/>
            <person name="Titball R.W."/>
            <person name="Pallen M.J."/>
            <person name="Vipond R."/>
        </authorList>
    </citation>
    <scope>NUCLEOTIDE SEQUENCE [LARGE SCALE GENOMIC DNA]</scope>
    <source>
        <strain>FSC 198</strain>
    </source>
</reference>
<dbReference type="EC" id="3.6.1.23" evidence="1"/>
<dbReference type="EMBL" id="AM286280">
    <property type="protein sequence ID" value="CAL08335.1"/>
    <property type="molecule type" value="Genomic_DNA"/>
</dbReference>
<dbReference type="RefSeq" id="WP_003017689.1">
    <property type="nucleotide sequence ID" value="NC_008245.1"/>
</dbReference>
<dbReference type="SMR" id="Q14JC6"/>
<dbReference type="KEGG" id="ftf:FTF0319"/>
<dbReference type="HOGENOM" id="CLU_068508_1_1_6"/>
<dbReference type="UniPathway" id="UPA00610">
    <property type="reaction ID" value="UER00666"/>
</dbReference>
<dbReference type="GO" id="GO:0004170">
    <property type="term" value="F:dUTP diphosphatase activity"/>
    <property type="evidence" value="ECO:0007669"/>
    <property type="project" value="UniProtKB-UniRule"/>
</dbReference>
<dbReference type="GO" id="GO:0000287">
    <property type="term" value="F:magnesium ion binding"/>
    <property type="evidence" value="ECO:0007669"/>
    <property type="project" value="UniProtKB-UniRule"/>
</dbReference>
<dbReference type="GO" id="GO:0006226">
    <property type="term" value="P:dUMP biosynthetic process"/>
    <property type="evidence" value="ECO:0007669"/>
    <property type="project" value="UniProtKB-UniRule"/>
</dbReference>
<dbReference type="GO" id="GO:0046081">
    <property type="term" value="P:dUTP catabolic process"/>
    <property type="evidence" value="ECO:0007669"/>
    <property type="project" value="InterPro"/>
</dbReference>
<dbReference type="CDD" id="cd07557">
    <property type="entry name" value="trimeric_dUTPase"/>
    <property type="match status" value="1"/>
</dbReference>
<dbReference type="FunFam" id="2.70.40.10:FF:000002">
    <property type="entry name" value="dUTP diphosphatase"/>
    <property type="match status" value="1"/>
</dbReference>
<dbReference type="Gene3D" id="2.70.40.10">
    <property type="match status" value="1"/>
</dbReference>
<dbReference type="HAMAP" id="MF_00116">
    <property type="entry name" value="dUTPase_bact"/>
    <property type="match status" value="1"/>
</dbReference>
<dbReference type="InterPro" id="IPR008181">
    <property type="entry name" value="dUTPase"/>
</dbReference>
<dbReference type="InterPro" id="IPR029054">
    <property type="entry name" value="dUTPase-like"/>
</dbReference>
<dbReference type="InterPro" id="IPR036157">
    <property type="entry name" value="dUTPase-like_sf"/>
</dbReference>
<dbReference type="InterPro" id="IPR033704">
    <property type="entry name" value="dUTPase_trimeric"/>
</dbReference>
<dbReference type="NCBIfam" id="TIGR00576">
    <property type="entry name" value="dut"/>
    <property type="match status" value="1"/>
</dbReference>
<dbReference type="NCBIfam" id="NF001862">
    <property type="entry name" value="PRK00601.1"/>
    <property type="match status" value="1"/>
</dbReference>
<dbReference type="PANTHER" id="PTHR11241">
    <property type="entry name" value="DEOXYURIDINE 5'-TRIPHOSPHATE NUCLEOTIDOHYDROLASE"/>
    <property type="match status" value="1"/>
</dbReference>
<dbReference type="PANTHER" id="PTHR11241:SF0">
    <property type="entry name" value="DEOXYURIDINE 5'-TRIPHOSPHATE NUCLEOTIDOHYDROLASE"/>
    <property type="match status" value="1"/>
</dbReference>
<dbReference type="Pfam" id="PF00692">
    <property type="entry name" value="dUTPase"/>
    <property type="match status" value="1"/>
</dbReference>
<dbReference type="SUPFAM" id="SSF51283">
    <property type="entry name" value="dUTPase-like"/>
    <property type="match status" value="1"/>
</dbReference>
<protein>
    <recommendedName>
        <fullName evidence="1">Deoxyuridine 5'-triphosphate nucleotidohydrolase</fullName>
        <shortName evidence="1">dUTPase</shortName>
        <ecNumber evidence="1">3.6.1.23</ecNumber>
    </recommendedName>
    <alternativeName>
        <fullName evidence="1">dUTP pyrophosphatase</fullName>
    </alternativeName>
</protein>
<sequence>MKVELKILNKELIKELPGYATEGSAAIDLRACISESIYLKSGECKLVATGIAINIANPNYAAMILPRSGLGHKKGLVLGNGTGLIDSDYQGELMVSCFNRSQETIEIEPLMRFAQLVIVPVVQANFEIVEDFSQQSVRATGGFGHTGV</sequence>